<name>SYY_CLOB1</name>
<gene>
    <name evidence="1" type="primary">tyrS</name>
    <name type="ordered locus">CLB_3381</name>
</gene>
<protein>
    <recommendedName>
        <fullName evidence="1">Tyrosine--tRNA ligase</fullName>
        <ecNumber evidence="1">6.1.1.1</ecNumber>
    </recommendedName>
    <alternativeName>
        <fullName evidence="1">Tyrosyl-tRNA synthetase</fullName>
        <shortName evidence="1">TyrRS</shortName>
    </alternativeName>
</protein>
<organism>
    <name type="scientific">Clostridium botulinum (strain ATCC 19397 / Type A)</name>
    <dbReference type="NCBI Taxonomy" id="441770"/>
    <lineage>
        <taxon>Bacteria</taxon>
        <taxon>Bacillati</taxon>
        <taxon>Bacillota</taxon>
        <taxon>Clostridia</taxon>
        <taxon>Eubacteriales</taxon>
        <taxon>Clostridiaceae</taxon>
        <taxon>Clostridium</taxon>
    </lineage>
</organism>
<feature type="chain" id="PRO_1000189271" description="Tyrosine--tRNA ligase">
    <location>
        <begin position="1"/>
        <end position="407"/>
    </location>
</feature>
<feature type="domain" description="S4 RNA-binding" evidence="1">
    <location>
        <begin position="341"/>
        <end position="405"/>
    </location>
</feature>
<feature type="short sequence motif" description="'HIGH' region">
    <location>
        <begin position="40"/>
        <end position="49"/>
    </location>
</feature>
<feature type="short sequence motif" description="'KMSKS' region">
    <location>
        <begin position="228"/>
        <end position="232"/>
    </location>
</feature>
<feature type="binding site" evidence="1">
    <location>
        <position position="35"/>
    </location>
    <ligand>
        <name>L-tyrosine</name>
        <dbReference type="ChEBI" id="CHEBI:58315"/>
    </ligand>
</feature>
<feature type="binding site" evidence="1">
    <location>
        <position position="168"/>
    </location>
    <ligand>
        <name>L-tyrosine</name>
        <dbReference type="ChEBI" id="CHEBI:58315"/>
    </ligand>
</feature>
<feature type="binding site" evidence="1">
    <location>
        <position position="172"/>
    </location>
    <ligand>
        <name>L-tyrosine</name>
        <dbReference type="ChEBI" id="CHEBI:58315"/>
    </ligand>
</feature>
<feature type="binding site" evidence="1">
    <location>
        <position position="231"/>
    </location>
    <ligand>
        <name>ATP</name>
        <dbReference type="ChEBI" id="CHEBI:30616"/>
    </ligand>
</feature>
<keyword id="KW-0030">Aminoacyl-tRNA synthetase</keyword>
<keyword id="KW-0067">ATP-binding</keyword>
<keyword id="KW-0963">Cytoplasm</keyword>
<keyword id="KW-0436">Ligase</keyword>
<keyword id="KW-0547">Nucleotide-binding</keyword>
<keyword id="KW-0648">Protein biosynthesis</keyword>
<keyword id="KW-0694">RNA-binding</keyword>
<comment type="function">
    <text evidence="1">Catalyzes the attachment of tyrosine to tRNA(Tyr) in a two-step reaction: tyrosine is first activated by ATP to form Tyr-AMP and then transferred to the acceptor end of tRNA(Tyr).</text>
</comment>
<comment type="catalytic activity">
    <reaction evidence="1">
        <text>tRNA(Tyr) + L-tyrosine + ATP = L-tyrosyl-tRNA(Tyr) + AMP + diphosphate + H(+)</text>
        <dbReference type="Rhea" id="RHEA:10220"/>
        <dbReference type="Rhea" id="RHEA-COMP:9706"/>
        <dbReference type="Rhea" id="RHEA-COMP:9707"/>
        <dbReference type="ChEBI" id="CHEBI:15378"/>
        <dbReference type="ChEBI" id="CHEBI:30616"/>
        <dbReference type="ChEBI" id="CHEBI:33019"/>
        <dbReference type="ChEBI" id="CHEBI:58315"/>
        <dbReference type="ChEBI" id="CHEBI:78442"/>
        <dbReference type="ChEBI" id="CHEBI:78536"/>
        <dbReference type="ChEBI" id="CHEBI:456215"/>
        <dbReference type="EC" id="6.1.1.1"/>
    </reaction>
</comment>
<comment type="subunit">
    <text evidence="1">Homodimer.</text>
</comment>
<comment type="subcellular location">
    <subcellularLocation>
        <location evidence="1">Cytoplasm</location>
    </subcellularLocation>
</comment>
<comment type="similarity">
    <text evidence="1">Belongs to the class-I aminoacyl-tRNA synthetase family. TyrS type 1 subfamily.</text>
</comment>
<sequence length="407" mass="46459">MSNVYDILKERGYIKQLTHEEEIRELLGKEKISFYIGFDPTADSLHVGHFLQMMVMAHMQKAGHRPIALVGGGTGMIGDPTGKTDMRKMMTKEQIEHNCNCFKKQLAKIIDFSEDKAIMVNNADWLLNLNYIEFLREIGVHFSVNKMLTAECFKSRLEKGLSFLEFNYMLMQGYDFLELNRKYNCVMELGGDDQWSNILAGVDLIRRKESKSAYGMTFTLLTNSEGKKMGKTESGALWLDPEKTSPYEFYQYWRNVADADVEKCLRLITFLPMDEVRRLSSLEGAEINEAKKVLAFEVTKLIHGEEEAQKAKIAAEALFGGNAKDLGNMPTAYIDKNDLNNLLVDLLVKCEILPSKSEARRLIKQGGLYLNDEKVTDMNLVVTEEHVTEDGIMIRRGKKNFNRIVVE</sequence>
<dbReference type="EC" id="6.1.1.1" evidence="1"/>
<dbReference type="EMBL" id="CP000726">
    <property type="protein sequence ID" value="ABS35460.1"/>
    <property type="molecule type" value="Genomic_DNA"/>
</dbReference>
<dbReference type="RefSeq" id="WP_012048264.1">
    <property type="nucleotide sequence ID" value="NC_009697.1"/>
</dbReference>
<dbReference type="SMR" id="A7FYR9"/>
<dbReference type="GeneID" id="5187577"/>
<dbReference type="KEGG" id="cba:CLB_3381"/>
<dbReference type="HOGENOM" id="CLU_024003_0_3_9"/>
<dbReference type="GO" id="GO:0005829">
    <property type="term" value="C:cytosol"/>
    <property type="evidence" value="ECO:0007669"/>
    <property type="project" value="TreeGrafter"/>
</dbReference>
<dbReference type="GO" id="GO:0005524">
    <property type="term" value="F:ATP binding"/>
    <property type="evidence" value="ECO:0007669"/>
    <property type="project" value="UniProtKB-UniRule"/>
</dbReference>
<dbReference type="GO" id="GO:0003723">
    <property type="term" value="F:RNA binding"/>
    <property type="evidence" value="ECO:0007669"/>
    <property type="project" value="UniProtKB-KW"/>
</dbReference>
<dbReference type="GO" id="GO:0004831">
    <property type="term" value="F:tyrosine-tRNA ligase activity"/>
    <property type="evidence" value="ECO:0007669"/>
    <property type="project" value="UniProtKB-UniRule"/>
</dbReference>
<dbReference type="GO" id="GO:0006437">
    <property type="term" value="P:tyrosyl-tRNA aminoacylation"/>
    <property type="evidence" value="ECO:0007669"/>
    <property type="project" value="UniProtKB-UniRule"/>
</dbReference>
<dbReference type="CDD" id="cd00165">
    <property type="entry name" value="S4"/>
    <property type="match status" value="1"/>
</dbReference>
<dbReference type="CDD" id="cd00805">
    <property type="entry name" value="TyrRS_core"/>
    <property type="match status" value="1"/>
</dbReference>
<dbReference type="FunFam" id="1.10.240.10:FF:000001">
    <property type="entry name" value="Tyrosine--tRNA ligase"/>
    <property type="match status" value="1"/>
</dbReference>
<dbReference type="FunFam" id="3.10.290.10:FF:000022">
    <property type="entry name" value="Tyrosine--tRNA ligase"/>
    <property type="match status" value="1"/>
</dbReference>
<dbReference type="FunFam" id="3.40.50.620:FF:000008">
    <property type="entry name" value="Tyrosine--tRNA ligase"/>
    <property type="match status" value="1"/>
</dbReference>
<dbReference type="Gene3D" id="3.40.50.620">
    <property type="entry name" value="HUPs"/>
    <property type="match status" value="1"/>
</dbReference>
<dbReference type="Gene3D" id="3.10.290.10">
    <property type="entry name" value="RNA-binding S4 domain"/>
    <property type="match status" value="1"/>
</dbReference>
<dbReference type="Gene3D" id="1.10.240.10">
    <property type="entry name" value="Tyrosyl-Transfer RNA Synthetase"/>
    <property type="match status" value="1"/>
</dbReference>
<dbReference type="HAMAP" id="MF_02006">
    <property type="entry name" value="Tyr_tRNA_synth_type1"/>
    <property type="match status" value="1"/>
</dbReference>
<dbReference type="InterPro" id="IPR001412">
    <property type="entry name" value="aa-tRNA-synth_I_CS"/>
</dbReference>
<dbReference type="InterPro" id="IPR002305">
    <property type="entry name" value="aa-tRNA-synth_Ic"/>
</dbReference>
<dbReference type="InterPro" id="IPR014729">
    <property type="entry name" value="Rossmann-like_a/b/a_fold"/>
</dbReference>
<dbReference type="InterPro" id="IPR036986">
    <property type="entry name" value="S4_RNA-bd_sf"/>
</dbReference>
<dbReference type="InterPro" id="IPR054608">
    <property type="entry name" value="SYY-like_C"/>
</dbReference>
<dbReference type="InterPro" id="IPR002307">
    <property type="entry name" value="Tyr-tRNA-ligase"/>
</dbReference>
<dbReference type="InterPro" id="IPR024088">
    <property type="entry name" value="Tyr-tRNA-ligase_bac-type"/>
</dbReference>
<dbReference type="InterPro" id="IPR024107">
    <property type="entry name" value="Tyr-tRNA-ligase_bac_1"/>
</dbReference>
<dbReference type="NCBIfam" id="TIGR00234">
    <property type="entry name" value="tyrS"/>
    <property type="match status" value="1"/>
</dbReference>
<dbReference type="PANTHER" id="PTHR11766:SF0">
    <property type="entry name" value="TYROSINE--TRNA LIGASE, MITOCHONDRIAL"/>
    <property type="match status" value="1"/>
</dbReference>
<dbReference type="PANTHER" id="PTHR11766">
    <property type="entry name" value="TYROSYL-TRNA SYNTHETASE"/>
    <property type="match status" value="1"/>
</dbReference>
<dbReference type="Pfam" id="PF22421">
    <property type="entry name" value="SYY_C-terminal"/>
    <property type="match status" value="1"/>
</dbReference>
<dbReference type="Pfam" id="PF00579">
    <property type="entry name" value="tRNA-synt_1b"/>
    <property type="match status" value="1"/>
</dbReference>
<dbReference type="PRINTS" id="PR01040">
    <property type="entry name" value="TRNASYNTHTYR"/>
</dbReference>
<dbReference type="SUPFAM" id="SSF55174">
    <property type="entry name" value="Alpha-L RNA-binding motif"/>
    <property type="match status" value="1"/>
</dbReference>
<dbReference type="SUPFAM" id="SSF52374">
    <property type="entry name" value="Nucleotidylyl transferase"/>
    <property type="match status" value="1"/>
</dbReference>
<dbReference type="PROSITE" id="PS00178">
    <property type="entry name" value="AA_TRNA_LIGASE_I"/>
    <property type="match status" value="1"/>
</dbReference>
<dbReference type="PROSITE" id="PS50889">
    <property type="entry name" value="S4"/>
    <property type="match status" value="1"/>
</dbReference>
<reference key="1">
    <citation type="journal article" date="2007" name="PLoS ONE">
        <title>Analysis of the neurotoxin complex genes in Clostridium botulinum A1-A4 and B1 strains: BoNT/A3, /Ba4 and /B1 clusters are located within plasmids.</title>
        <authorList>
            <person name="Smith T.J."/>
            <person name="Hill K.K."/>
            <person name="Foley B.T."/>
            <person name="Detter J.C."/>
            <person name="Munk A.C."/>
            <person name="Bruce D.C."/>
            <person name="Doggett N.A."/>
            <person name="Smith L.A."/>
            <person name="Marks J.D."/>
            <person name="Xie G."/>
            <person name="Brettin T.S."/>
        </authorList>
    </citation>
    <scope>NUCLEOTIDE SEQUENCE [LARGE SCALE GENOMIC DNA]</scope>
    <source>
        <strain>ATCC 19397 / Type A</strain>
    </source>
</reference>
<proteinExistence type="inferred from homology"/>
<evidence type="ECO:0000255" key="1">
    <source>
        <dbReference type="HAMAP-Rule" id="MF_02006"/>
    </source>
</evidence>
<accession>A7FYR9</accession>